<sequence>MVHCAGCKRPILDRFLLNVLDRAWHVKCVQCCECKCNLTEKCFSREGKLYCKNDFFRCFGTKCAGCAQGISPSDLVRRARSKVFHLNCFTCMMCNKQLSTGEELYIIDENKFVCKEDYLSNSSVAKENSLHSATTGSDPSLSPDSQDPSQDDAKDSESANVSDKEGGSNENDDQNLGAKRRGPRTTIKAKQLETLKAAFAATPKPTRHIREQLAQETGLNMRVIQVWFQNRRSKERRMKQLSALGARRHAFFRSPRRMRPLVDRLEPGELIPNGPFSFYGDYQSEYYGPGGNYDFFPQGPPSSQAQTPVDLPFVPSSGPSGTPLGGLDHPLPGHHPSSEAQRFTDILAHPPGDSPSPEPSLPGPLHSMSAEVFGPSPPFSSLSVNGGASYGNHLSHPPEMNEAAVW</sequence>
<organism>
    <name type="scientific">Mus musculus</name>
    <name type="common">Mouse</name>
    <dbReference type="NCBI Taxonomy" id="10090"/>
    <lineage>
        <taxon>Eukaryota</taxon>
        <taxon>Metazoa</taxon>
        <taxon>Chordata</taxon>
        <taxon>Craniata</taxon>
        <taxon>Vertebrata</taxon>
        <taxon>Euteleostomi</taxon>
        <taxon>Mammalia</taxon>
        <taxon>Eutheria</taxon>
        <taxon>Euarchontoglires</taxon>
        <taxon>Glires</taxon>
        <taxon>Rodentia</taxon>
        <taxon>Myomorpha</taxon>
        <taxon>Muroidea</taxon>
        <taxon>Muridae</taxon>
        <taxon>Murinae</taxon>
        <taxon>Mus</taxon>
        <taxon>Mus</taxon>
    </lineage>
</organism>
<accession>P63006</accession>
<accession>P36199</accession>
<proteinExistence type="evidence at protein level"/>
<evidence type="ECO:0000250" key="1"/>
<evidence type="ECO:0000250" key="2">
    <source>
        <dbReference type="UniProtKB" id="P63007"/>
    </source>
</evidence>
<evidence type="ECO:0000255" key="3">
    <source>
        <dbReference type="PROSITE-ProRule" id="PRU00108"/>
    </source>
</evidence>
<evidence type="ECO:0000255" key="4">
    <source>
        <dbReference type="PROSITE-ProRule" id="PRU00125"/>
    </source>
</evidence>
<evidence type="ECO:0000256" key="5">
    <source>
        <dbReference type="SAM" id="MobiDB-lite"/>
    </source>
</evidence>
<evidence type="ECO:0000269" key="6">
    <source>
    </source>
</evidence>
<evidence type="ECO:0000269" key="7">
    <source>
    </source>
</evidence>
<evidence type="ECO:0000269" key="8">
    <source>
    </source>
</evidence>
<evidence type="ECO:0000269" key="9">
    <source>
    </source>
</evidence>
<evidence type="ECO:0000269" key="10">
    <source>
    </source>
</evidence>
<evidence type="ECO:0000305" key="11"/>
<comment type="function">
    <text evidence="6">Potential transcription factor. May play a role in early mesoderm formation and later in lateral mesoderm differentiation and neurogenesis.</text>
</comment>
<comment type="subunit">
    <text evidence="9 10">Interacts with LDB1 via the tandem LIM domains.</text>
</comment>
<comment type="subcellular location">
    <subcellularLocation>
        <location evidence="3 8">Nucleus</location>
    </subcellularLocation>
</comment>
<comment type="tissue specificity">
    <text evidence="6 7 8">In mid to late stage embryos, expressed in a restricted region of mesoderm in the primitive streak. At 7.5 days, expressed in a horseshoe shape at the periphery of the node, as well as along both sides of the adjacent notochord. Also present in presumptive lateral and intermediate mesoderm. Later, expression become progressively restricted to intermediate mesoderm, and the developing excretory system including the pronephric region, mesonephros, nephric duct and metanephros. In the metanephros, strongly expressed in renal vesicles and S-shaped and coma-shaped bodies, as well as in the ureteric bud and its derivatives. Also expressed in the dorsal root ganglia. By stage 10.5, also expressed in regions of the central nervous system in the telencephalon through to the spinal cord. In adults, expressed in the cerebellum/medulla and kidney, and at very low levels in the cerebrum.</text>
</comment>
<comment type="developmental stage">
    <text evidence="7">Expressed in both embryos and adults.</text>
</comment>
<comment type="domain">
    <text evidence="1">The LIM domains exert a negative regulatory function and disruption of the LIM domains produces an activated form. In addition, two activation domains and a negative regulatory domain exist C-terminally to the homeobox (By similarity).</text>
</comment>
<keyword id="KW-0217">Developmental protein</keyword>
<keyword id="KW-0221">Differentiation</keyword>
<keyword id="KW-0238">DNA-binding</keyword>
<keyword id="KW-0371">Homeobox</keyword>
<keyword id="KW-0440">LIM domain</keyword>
<keyword id="KW-0479">Metal-binding</keyword>
<keyword id="KW-0524">Neurogenesis</keyword>
<keyword id="KW-0539">Nucleus</keyword>
<keyword id="KW-0597">Phosphoprotein</keyword>
<keyword id="KW-1185">Reference proteome</keyword>
<keyword id="KW-0677">Repeat</keyword>
<keyword id="KW-0804">Transcription</keyword>
<keyword id="KW-0805">Transcription regulation</keyword>
<keyword id="KW-0862">Zinc</keyword>
<reference key="1">
    <citation type="journal article" date="1994" name="Dev. Dyn.">
        <title>Expression patterns of the murine LIM class homeobox gene lim1 in the developing brain and excretory system.</title>
        <authorList>
            <person name="Fujii T."/>
            <person name="Pichel J.G."/>
            <person name="Taira M."/>
            <person name="Toyama R."/>
            <person name="Dawid I.B."/>
            <person name="Westphal H."/>
        </authorList>
    </citation>
    <scope>NUCLEOTIDE SEQUENCE [MRNA]</scope>
    <scope>TISSUE SPECIFICITY</scope>
    <scope>DEVELOPMENTAL STAGE</scope>
    <source>
        <strain>BALB/cJ</strain>
        <tissue>Brain</tissue>
    </source>
</reference>
<reference key="2">
    <citation type="journal article" date="1994" name="Dev. Biol.">
        <title>Embryonic expression of Lim-1, the mouse homolog of Xenopus Xlim-1, suggests a role in lateral mesoderm differentiation and neurogenesis.</title>
        <authorList>
            <person name="Barnes J.D."/>
            <person name="Crosby J.L."/>
            <person name="Jones C.M."/>
            <person name="Wright C.V."/>
            <person name="Hogan B.L."/>
        </authorList>
    </citation>
    <scope>NUCLEOTIDE SEQUENCE [MRNA]</scope>
    <scope>FUNCTION</scope>
    <scope>TISSUE SPECIFICITY</scope>
    <source>
        <tissue>Embryo</tissue>
    </source>
</reference>
<reference key="3">
    <citation type="journal article" date="1999" name="Mamm. Genome">
        <title>Sequence and genomic organization of the mouse Lim1 gene.</title>
        <authorList>
            <person name="Li Y."/>
            <person name="Cheah S.S."/>
            <person name="Deng J.M."/>
            <person name="Shawlot W."/>
            <person name="Behringer R.R."/>
        </authorList>
    </citation>
    <scope>NUCLEOTIDE SEQUENCE [GENOMIC DNA]</scope>
    <source>
        <strain>129/SvEv</strain>
    </source>
</reference>
<reference key="4">
    <citation type="journal article" date="1996" name="Int. J. Dev. Biol.">
        <title>The LIM homeodomain protein Lim-1 is widely expressed in neural, neural crest and mesoderm derivatives in vertebrate development.</title>
        <authorList>
            <person name="Karavanov A.A."/>
            <person name="Saint-Jeannet J.P."/>
            <person name="Karavanova I."/>
            <person name="Taira M."/>
            <person name="Dawid I.B."/>
        </authorList>
    </citation>
    <scope>SUBCELLULAR LOCATION</scope>
    <scope>TISSUE SPECIFICITY</scope>
</reference>
<reference key="5">
    <citation type="journal article" date="1996" name="Nature">
        <title>Interactions of the LIM-domain-binding factor Ldb1 with LIM homeodomain proteins.</title>
        <authorList>
            <person name="Agulnick A.D."/>
            <person name="Taira M."/>
            <person name="Breen J.J."/>
            <person name="Tanaka T."/>
            <person name="Dawid I.B."/>
            <person name="Westphal H."/>
        </authorList>
    </citation>
    <scope>INTERACTION WITH LDB1</scope>
    <scope>MUTAGENESIS OF CYS-28 AND CYS-88</scope>
</reference>
<reference key="6">
    <citation type="journal article" date="1998" name="J. Biol. Chem.">
        <title>Interactions between LIM domains and the LIM domain-binding protein Ldb1.</title>
        <authorList>
            <person name="Breen J.J."/>
            <person name="Agulnick A.D."/>
            <person name="Westphal H."/>
            <person name="Dawid I.B."/>
        </authorList>
    </citation>
    <scope>INTERACTION WITH LDB1</scope>
</reference>
<dbReference type="EMBL" id="Z27410">
    <property type="protein sequence ID" value="CAA81797.1"/>
    <property type="molecule type" value="mRNA"/>
</dbReference>
<dbReference type="EMBL" id="S68107">
    <property type="protein sequence ID" value="AAC60669.2"/>
    <property type="molecule type" value="mRNA"/>
</dbReference>
<dbReference type="EMBL" id="AF039706">
    <property type="protein sequence ID" value="AAD02169.1"/>
    <property type="molecule type" value="Genomic_DNA"/>
</dbReference>
<dbReference type="EMBL" id="AF039705">
    <property type="protein sequence ID" value="AAD02169.1"/>
    <property type="status" value="JOINED"/>
    <property type="molecule type" value="Genomic_DNA"/>
</dbReference>
<dbReference type="CCDS" id="CCDS25187.1"/>
<dbReference type="PIR" id="I48637">
    <property type="entry name" value="I48637"/>
</dbReference>
<dbReference type="RefSeq" id="NP_032524.1">
    <property type="nucleotide sequence ID" value="NM_008498.3"/>
</dbReference>
<dbReference type="SMR" id="P63006"/>
<dbReference type="BioGRID" id="201154">
    <property type="interactions" value="2"/>
</dbReference>
<dbReference type="FunCoup" id="P63006">
    <property type="interactions" value="108"/>
</dbReference>
<dbReference type="IntAct" id="P63006">
    <property type="interactions" value="2"/>
</dbReference>
<dbReference type="STRING" id="10090.ENSMUSP00000018842"/>
<dbReference type="iPTMnet" id="P63006"/>
<dbReference type="PhosphoSitePlus" id="P63006"/>
<dbReference type="jPOST" id="P63006"/>
<dbReference type="PaxDb" id="10090-ENSMUSP00000018842"/>
<dbReference type="ProteomicsDB" id="264981"/>
<dbReference type="Antibodypedia" id="72534">
    <property type="antibodies" value="567 antibodies from 34 providers"/>
</dbReference>
<dbReference type="DNASU" id="16869"/>
<dbReference type="Ensembl" id="ENSMUST00000018842.14">
    <property type="protein sequence ID" value="ENSMUSP00000018842.7"/>
    <property type="gene ID" value="ENSMUSG00000018698.16"/>
</dbReference>
<dbReference type="GeneID" id="16869"/>
<dbReference type="KEGG" id="mmu:16869"/>
<dbReference type="UCSC" id="uc007kqo.1">
    <property type="organism name" value="mouse"/>
</dbReference>
<dbReference type="AGR" id="MGI:99783"/>
<dbReference type="CTD" id="3975"/>
<dbReference type="MGI" id="MGI:99783">
    <property type="gene designation" value="Lhx1"/>
</dbReference>
<dbReference type="VEuPathDB" id="HostDB:ENSMUSG00000018698"/>
<dbReference type="eggNOG" id="KOG0490">
    <property type="taxonomic scope" value="Eukaryota"/>
</dbReference>
<dbReference type="GeneTree" id="ENSGT00940000160834"/>
<dbReference type="HOGENOM" id="CLU_027802_3_1_1"/>
<dbReference type="InParanoid" id="P63006"/>
<dbReference type="OMA" id="NDQQFYP"/>
<dbReference type="OrthoDB" id="10068367at2759"/>
<dbReference type="PhylomeDB" id="P63006"/>
<dbReference type="TreeFam" id="TF315442"/>
<dbReference type="BioGRID-ORCS" id="16869">
    <property type="hits" value="0 hits in 79 CRISPR screens"/>
</dbReference>
<dbReference type="PRO" id="PR:P63006"/>
<dbReference type="Proteomes" id="UP000000589">
    <property type="component" value="Chromosome 11"/>
</dbReference>
<dbReference type="RNAct" id="P63006">
    <property type="molecule type" value="protein"/>
</dbReference>
<dbReference type="Bgee" id="ENSMUSG00000018698">
    <property type="expression patterns" value="Expressed in hypoblast (generic) and 134 other cell types or tissues"/>
</dbReference>
<dbReference type="ExpressionAtlas" id="P63006">
    <property type="expression patterns" value="baseline and differential"/>
</dbReference>
<dbReference type="GO" id="GO:0005654">
    <property type="term" value="C:nucleoplasm"/>
    <property type="evidence" value="ECO:0000304"/>
    <property type="project" value="Reactome"/>
</dbReference>
<dbReference type="GO" id="GO:0005634">
    <property type="term" value="C:nucleus"/>
    <property type="evidence" value="ECO:0000314"/>
    <property type="project" value="UniProtKB"/>
</dbReference>
<dbReference type="GO" id="GO:0032991">
    <property type="term" value="C:protein-containing complex"/>
    <property type="evidence" value="ECO:0000314"/>
    <property type="project" value="UniProtKB"/>
</dbReference>
<dbReference type="GO" id="GO:0005667">
    <property type="term" value="C:transcription regulator complex"/>
    <property type="evidence" value="ECO:0000314"/>
    <property type="project" value="MGI"/>
</dbReference>
<dbReference type="GO" id="GO:0000987">
    <property type="term" value="F:cis-regulatory region sequence-specific DNA binding"/>
    <property type="evidence" value="ECO:0000314"/>
    <property type="project" value="MGI"/>
</dbReference>
<dbReference type="GO" id="GO:0003700">
    <property type="term" value="F:DNA-binding transcription factor activity"/>
    <property type="evidence" value="ECO:0000315"/>
    <property type="project" value="UniProtKB"/>
</dbReference>
<dbReference type="GO" id="GO:0000981">
    <property type="term" value="F:DNA-binding transcription factor activity, RNA polymerase II-specific"/>
    <property type="evidence" value="ECO:0007669"/>
    <property type="project" value="InterPro"/>
</dbReference>
<dbReference type="GO" id="GO:0008270">
    <property type="term" value="F:zinc ion binding"/>
    <property type="evidence" value="ECO:0007669"/>
    <property type="project" value="InterPro"/>
</dbReference>
<dbReference type="GO" id="GO:0048646">
    <property type="term" value="P:anatomical structure formation involved in morphogenesis"/>
    <property type="evidence" value="ECO:0000315"/>
    <property type="project" value="MGI"/>
</dbReference>
<dbReference type="GO" id="GO:0009653">
    <property type="term" value="P:anatomical structure morphogenesis"/>
    <property type="evidence" value="ECO:0000315"/>
    <property type="project" value="MGI"/>
</dbReference>
<dbReference type="GO" id="GO:0009948">
    <property type="term" value="P:anterior/posterior axis specification"/>
    <property type="evidence" value="ECO:0000316"/>
    <property type="project" value="MGI"/>
</dbReference>
<dbReference type="GO" id="GO:0009952">
    <property type="term" value="P:anterior/posterior pattern specification"/>
    <property type="evidence" value="ECO:0000316"/>
    <property type="project" value="MGI"/>
</dbReference>
<dbReference type="GO" id="GO:0001658">
    <property type="term" value="P:branching involved in ureteric bud morphogenesis"/>
    <property type="evidence" value="ECO:0000270"/>
    <property type="project" value="UniProtKB"/>
</dbReference>
<dbReference type="GO" id="GO:0030154">
    <property type="term" value="P:cell differentiation"/>
    <property type="evidence" value="ECO:0000315"/>
    <property type="project" value="MGI"/>
</dbReference>
<dbReference type="GO" id="GO:0007267">
    <property type="term" value="P:cell-cell signaling"/>
    <property type="evidence" value="ECO:0000316"/>
    <property type="project" value="MGI"/>
</dbReference>
<dbReference type="GO" id="GO:0044344">
    <property type="term" value="P:cellular response to fibroblast growth factor stimulus"/>
    <property type="evidence" value="ECO:0007669"/>
    <property type="project" value="Ensembl"/>
</dbReference>
<dbReference type="GO" id="GO:0021702">
    <property type="term" value="P:cerebellar Purkinje cell differentiation"/>
    <property type="evidence" value="ECO:0000316"/>
    <property type="project" value="MGI"/>
</dbReference>
<dbReference type="GO" id="GO:0021937">
    <property type="term" value="P:cerebellar Purkinje cell-granule cell precursor cell signaling"/>
    <property type="evidence" value="ECO:0000316"/>
    <property type="project" value="MGI"/>
</dbReference>
<dbReference type="GO" id="GO:0021549">
    <property type="term" value="P:cerebellum development"/>
    <property type="evidence" value="ECO:0000316"/>
    <property type="project" value="MGI"/>
</dbReference>
<dbReference type="GO" id="GO:0060067">
    <property type="term" value="P:cervix development"/>
    <property type="evidence" value="ECO:0000315"/>
    <property type="project" value="UniProtKB"/>
</dbReference>
<dbReference type="GO" id="GO:0072049">
    <property type="term" value="P:comma-shaped body morphogenesis"/>
    <property type="evidence" value="ECO:0000315"/>
    <property type="project" value="UniProtKB"/>
</dbReference>
<dbReference type="GO" id="GO:0009953">
    <property type="term" value="P:dorsal/ventral pattern formation"/>
    <property type="evidence" value="ECO:0000316"/>
    <property type="project" value="MGI"/>
</dbReference>
<dbReference type="GO" id="GO:0001705">
    <property type="term" value="P:ectoderm formation"/>
    <property type="evidence" value="ECO:0000316"/>
    <property type="project" value="MGI"/>
</dbReference>
<dbReference type="GO" id="GO:0009880">
    <property type="term" value="P:embryonic pattern specification"/>
    <property type="evidence" value="ECO:0000316"/>
    <property type="project" value="MGI"/>
</dbReference>
<dbReference type="GO" id="GO:0060059">
    <property type="term" value="P:embryonic retina morphogenesis in camera-type eye"/>
    <property type="evidence" value="ECO:0000315"/>
    <property type="project" value="UniProtKB"/>
</dbReference>
<dbReference type="GO" id="GO:0048703">
    <property type="term" value="P:embryonic viscerocranium morphogenesis"/>
    <property type="evidence" value="ECO:0000315"/>
    <property type="project" value="UniProtKB"/>
</dbReference>
<dbReference type="GO" id="GO:0007492">
    <property type="term" value="P:endoderm development"/>
    <property type="evidence" value="ECO:0000315"/>
    <property type="project" value="MGI"/>
</dbReference>
<dbReference type="GO" id="GO:0001706">
    <property type="term" value="P:endoderm formation"/>
    <property type="evidence" value="ECO:0000315"/>
    <property type="project" value="MGI"/>
</dbReference>
<dbReference type="GO" id="GO:0060429">
    <property type="term" value="P:epithelium development"/>
    <property type="evidence" value="ECO:0000315"/>
    <property type="project" value="UniProtKB"/>
</dbReference>
<dbReference type="GO" id="GO:0021871">
    <property type="term" value="P:forebrain regionalization"/>
    <property type="evidence" value="ECO:0000316"/>
    <property type="project" value="MGI"/>
</dbReference>
<dbReference type="GO" id="GO:0001702">
    <property type="term" value="P:gastrulation with mouth forming second"/>
    <property type="evidence" value="ECO:0000315"/>
    <property type="project" value="MGI"/>
</dbReference>
<dbReference type="GO" id="GO:0060322">
    <property type="term" value="P:head development"/>
    <property type="evidence" value="ECO:0000316"/>
    <property type="project" value="UniProtKB"/>
</dbReference>
<dbReference type="GO" id="GO:0001822">
    <property type="term" value="P:kidney development"/>
    <property type="evidence" value="ECO:0000315"/>
    <property type="project" value="MGI"/>
</dbReference>
<dbReference type="GO" id="GO:0097477">
    <property type="term" value="P:lateral motor column neuron migration"/>
    <property type="evidence" value="ECO:0000315"/>
    <property type="project" value="UniProtKB"/>
</dbReference>
<dbReference type="GO" id="GO:0048382">
    <property type="term" value="P:mesendoderm development"/>
    <property type="evidence" value="ECO:0000315"/>
    <property type="project" value="MGI"/>
</dbReference>
<dbReference type="GO" id="GO:0072177">
    <property type="term" value="P:mesonephric duct development"/>
    <property type="evidence" value="ECO:0007669"/>
    <property type="project" value="Ensembl"/>
</dbReference>
<dbReference type="GO" id="GO:0001823">
    <property type="term" value="P:mesonephros development"/>
    <property type="evidence" value="ECO:0000270"/>
    <property type="project" value="UniProtKB"/>
</dbReference>
<dbReference type="GO" id="GO:0072278">
    <property type="term" value="P:metanephric comma-shaped body morphogenesis"/>
    <property type="evidence" value="ECO:0007669"/>
    <property type="project" value="Ensembl"/>
</dbReference>
<dbReference type="GO" id="GO:0072224">
    <property type="term" value="P:metanephric glomerulus development"/>
    <property type="evidence" value="ECO:0007669"/>
    <property type="project" value="Ensembl"/>
</dbReference>
<dbReference type="GO" id="GO:0035502">
    <property type="term" value="P:metanephric part of ureteric bud development"/>
    <property type="evidence" value="ECO:0007669"/>
    <property type="project" value="Ensembl"/>
</dbReference>
<dbReference type="GO" id="GO:0072283">
    <property type="term" value="P:metanephric renal vesicle morphogenesis"/>
    <property type="evidence" value="ECO:0000270"/>
    <property type="project" value="UniProtKB"/>
</dbReference>
<dbReference type="GO" id="GO:0072284">
    <property type="term" value="P:metanephric S-shaped body morphogenesis"/>
    <property type="evidence" value="ECO:0000270"/>
    <property type="project" value="UniProtKB"/>
</dbReference>
<dbReference type="GO" id="GO:0001656">
    <property type="term" value="P:metanephros development"/>
    <property type="evidence" value="ECO:0000270"/>
    <property type="project" value="UniProtKB"/>
</dbReference>
<dbReference type="GO" id="GO:0008045">
    <property type="term" value="P:motor neuron axon guidance"/>
    <property type="evidence" value="ECO:0000315"/>
    <property type="project" value="UniProtKB"/>
</dbReference>
<dbReference type="GO" id="GO:0045892">
    <property type="term" value="P:negative regulation of DNA-templated transcription"/>
    <property type="evidence" value="ECO:0000315"/>
    <property type="project" value="UniProtKB"/>
</dbReference>
<dbReference type="GO" id="GO:0035849">
    <property type="term" value="P:nephric duct elongation"/>
    <property type="evidence" value="ECO:0000315"/>
    <property type="project" value="UniProtKB"/>
</dbReference>
<dbReference type="GO" id="GO:0072178">
    <property type="term" value="P:nephric duct morphogenesis"/>
    <property type="evidence" value="ECO:0000315"/>
    <property type="project" value="UniProtKB"/>
</dbReference>
<dbReference type="GO" id="GO:0060066">
    <property type="term" value="P:oviduct development"/>
    <property type="evidence" value="ECO:0000315"/>
    <property type="project" value="UniProtKB"/>
</dbReference>
<dbReference type="GO" id="GO:0035846">
    <property type="term" value="P:oviduct epithelium development"/>
    <property type="evidence" value="ECO:0000315"/>
    <property type="project" value="UniProtKB"/>
</dbReference>
<dbReference type="GO" id="GO:0061205">
    <property type="term" value="P:paramesonephric duct development"/>
    <property type="evidence" value="ECO:0000315"/>
    <property type="project" value="UniProtKB"/>
</dbReference>
<dbReference type="GO" id="GO:0007389">
    <property type="term" value="P:pattern specification process"/>
    <property type="evidence" value="ECO:0000315"/>
    <property type="project" value="MGI"/>
</dbReference>
<dbReference type="GO" id="GO:2000744">
    <property type="term" value="P:positive regulation of anterior head development"/>
    <property type="evidence" value="ECO:0000315"/>
    <property type="project" value="UniProtKB"/>
</dbReference>
<dbReference type="GO" id="GO:0090190">
    <property type="term" value="P:positive regulation of branching involved in ureteric bud morphogenesis"/>
    <property type="evidence" value="ECO:0000315"/>
    <property type="project" value="UniProtKB"/>
</dbReference>
<dbReference type="GO" id="GO:0045893">
    <property type="term" value="P:positive regulation of DNA-templated transcription"/>
    <property type="evidence" value="ECO:0000315"/>
    <property type="project" value="UniProtKB"/>
</dbReference>
<dbReference type="GO" id="GO:0040019">
    <property type="term" value="P:positive regulation of embryonic development"/>
    <property type="evidence" value="ECO:0000315"/>
    <property type="project" value="UniProtKB"/>
</dbReference>
<dbReference type="GO" id="GO:2000543">
    <property type="term" value="P:positive regulation of gastrulation"/>
    <property type="evidence" value="ECO:0000315"/>
    <property type="project" value="UniProtKB"/>
</dbReference>
<dbReference type="GO" id="GO:2000768">
    <property type="term" value="P:positive regulation of nephron tubule epithelial cell differentiation"/>
    <property type="evidence" value="ECO:0000315"/>
    <property type="project" value="UniProtKB"/>
</dbReference>
<dbReference type="GO" id="GO:0009791">
    <property type="term" value="P:post-embryonic development"/>
    <property type="evidence" value="ECO:0000315"/>
    <property type="project" value="MGI"/>
</dbReference>
<dbReference type="GO" id="GO:0090009">
    <property type="term" value="P:primitive streak formation"/>
    <property type="evidence" value="ECO:0000315"/>
    <property type="project" value="UniProtKB"/>
</dbReference>
<dbReference type="GO" id="GO:0048793">
    <property type="term" value="P:pronephros development"/>
    <property type="evidence" value="ECO:0000270"/>
    <property type="project" value="UniProtKB"/>
</dbReference>
<dbReference type="GO" id="GO:0010468">
    <property type="term" value="P:regulation of gene expression"/>
    <property type="evidence" value="ECO:0000315"/>
    <property type="project" value="MGI"/>
</dbReference>
<dbReference type="GO" id="GO:0072077">
    <property type="term" value="P:renal vesicle morphogenesis"/>
    <property type="evidence" value="ECO:0000315"/>
    <property type="project" value="UniProtKB"/>
</dbReference>
<dbReference type="GO" id="GO:0060041">
    <property type="term" value="P:retina development in camera-type eye"/>
    <property type="evidence" value="ECO:0000270"/>
    <property type="project" value="UniProtKB"/>
</dbReference>
<dbReference type="GO" id="GO:0010842">
    <property type="term" value="P:retina layer formation"/>
    <property type="evidence" value="ECO:0000315"/>
    <property type="project" value="UniProtKB"/>
</dbReference>
<dbReference type="GO" id="GO:0072050">
    <property type="term" value="P:S-shaped body morphogenesis"/>
    <property type="evidence" value="ECO:0000315"/>
    <property type="project" value="UniProtKB"/>
</dbReference>
<dbReference type="GO" id="GO:0032525">
    <property type="term" value="P:somite rostral/caudal axis specification"/>
    <property type="evidence" value="ECO:0000315"/>
    <property type="project" value="MGI"/>
</dbReference>
<dbReference type="GO" id="GO:0021527">
    <property type="term" value="P:spinal cord association neuron differentiation"/>
    <property type="evidence" value="ECO:0000316"/>
    <property type="project" value="UniProtKB"/>
</dbReference>
<dbReference type="GO" id="GO:0021510">
    <property type="term" value="P:spinal cord development"/>
    <property type="evidence" value="ECO:0000270"/>
    <property type="project" value="UniProtKB"/>
</dbReference>
<dbReference type="GO" id="GO:0021537">
    <property type="term" value="P:telencephalon development"/>
    <property type="evidence" value="ECO:0000270"/>
    <property type="project" value="UniProtKB"/>
</dbReference>
<dbReference type="GO" id="GO:0006366">
    <property type="term" value="P:transcription by RNA polymerase II"/>
    <property type="evidence" value="ECO:0000314"/>
    <property type="project" value="UniProtKB"/>
</dbReference>
<dbReference type="GO" id="GO:0072197">
    <property type="term" value="P:ureter morphogenesis"/>
    <property type="evidence" value="ECO:0000316"/>
    <property type="project" value="MGI"/>
</dbReference>
<dbReference type="GO" id="GO:0001657">
    <property type="term" value="P:ureteric bud development"/>
    <property type="evidence" value="ECO:0000315"/>
    <property type="project" value="MGI"/>
</dbReference>
<dbReference type="GO" id="GO:0001655">
    <property type="term" value="P:urogenital system development"/>
    <property type="evidence" value="ECO:0000315"/>
    <property type="project" value="MGI"/>
</dbReference>
<dbReference type="GO" id="GO:0035847">
    <property type="term" value="P:uterine epithelium development"/>
    <property type="evidence" value="ECO:0000315"/>
    <property type="project" value="UniProtKB"/>
</dbReference>
<dbReference type="GO" id="GO:0060065">
    <property type="term" value="P:uterus development"/>
    <property type="evidence" value="ECO:0000315"/>
    <property type="project" value="UniProtKB"/>
</dbReference>
<dbReference type="GO" id="GO:0060068">
    <property type="term" value="P:vagina development"/>
    <property type="evidence" value="ECO:0000315"/>
    <property type="project" value="UniProtKB"/>
</dbReference>
<dbReference type="GO" id="GO:0021517">
    <property type="term" value="P:ventral spinal cord development"/>
    <property type="evidence" value="ECO:0000270"/>
    <property type="project" value="UniProtKB"/>
</dbReference>
<dbReference type="CDD" id="cd00086">
    <property type="entry name" value="homeodomain"/>
    <property type="match status" value="1"/>
</dbReference>
<dbReference type="CDD" id="cd09367">
    <property type="entry name" value="LIM1_Lhx1_Lhx5"/>
    <property type="match status" value="1"/>
</dbReference>
<dbReference type="CDD" id="cd09375">
    <property type="entry name" value="LIM2_Lhx1_Lhx5"/>
    <property type="match status" value="1"/>
</dbReference>
<dbReference type="FunFam" id="2.10.110.10:FF:000120">
    <property type="entry name" value="Insulin gene enhancer protein ISL-2"/>
    <property type="match status" value="1"/>
</dbReference>
<dbReference type="FunFam" id="1.10.10.60:FF:000075">
    <property type="entry name" value="LIM/homeobox protein Lhx1"/>
    <property type="match status" value="1"/>
</dbReference>
<dbReference type="FunFam" id="2.10.110.10:FF:000046">
    <property type="entry name" value="LIM/homeobox protein Lhx1"/>
    <property type="match status" value="1"/>
</dbReference>
<dbReference type="Gene3D" id="2.10.110.10">
    <property type="entry name" value="Cysteine Rich Protein"/>
    <property type="match status" value="2"/>
</dbReference>
<dbReference type="Gene3D" id="1.10.10.60">
    <property type="entry name" value="Homeodomain-like"/>
    <property type="match status" value="1"/>
</dbReference>
<dbReference type="InterPro" id="IPR001356">
    <property type="entry name" value="HD"/>
</dbReference>
<dbReference type="InterPro" id="IPR017970">
    <property type="entry name" value="Homeobox_CS"/>
</dbReference>
<dbReference type="InterPro" id="IPR009057">
    <property type="entry name" value="Homeodomain-like_sf"/>
</dbReference>
<dbReference type="InterPro" id="IPR049618">
    <property type="entry name" value="Lhx1/5_LIM1"/>
</dbReference>
<dbReference type="InterPro" id="IPR049619">
    <property type="entry name" value="Lhx1/5_LIM2"/>
</dbReference>
<dbReference type="InterPro" id="IPR050453">
    <property type="entry name" value="LIM_Homeobox_TF"/>
</dbReference>
<dbReference type="InterPro" id="IPR001781">
    <property type="entry name" value="Znf_LIM"/>
</dbReference>
<dbReference type="PANTHER" id="PTHR24208">
    <property type="entry name" value="LIM/HOMEOBOX PROTEIN LHX"/>
    <property type="match status" value="1"/>
</dbReference>
<dbReference type="PANTHER" id="PTHR24208:SF106">
    <property type="entry name" value="LIM_HOMEOBOX PROTEIN LHX1"/>
    <property type="match status" value="1"/>
</dbReference>
<dbReference type="Pfam" id="PF00046">
    <property type="entry name" value="Homeodomain"/>
    <property type="match status" value="1"/>
</dbReference>
<dbReference type="Pfam" id="PF00412">
    <property type="entry name" value="LIM"/>
    <property type="match status" value="2"/>
</dbReference>
<dbReference type="SMART" id="SM00389">
    <property type="entry name" value="HOX"/>
    <property type="match status" value="1"/>
</dbReference>
<dbReference type="SMART" id="SM00132">
    <property type="entry name" value="LIM"/>
    <property type="match status" value="2"/>
</dbReference>
<dbReference type="SUPFAM" id="SSF57716">
    <property type="entry name" value="Glucocorticoid receptor-like (DNA-binding domain)"/>
    <property type="match status" value="2"/>
</dbReference>
<dbReference type="SUPFAM" id="SSF46689">
    <property type="entry name" value="Homeodomain-like"/>
    <property type="match status" value="1"/>
</dbReference>
<dbReference type="PROSITE" id="PS00027">
    <property type="entry name" value="HOMEOBOX_1"/>
    <property type="match status" value="1"/>
</dbReference>
<dbReference type="PROSITE" id="PS50071">
    <property type="entry name" value="HOMEOBOX_2"/>
    <property type="match status" value="1"/>
</dbReference>
<dbReference type="PROSITE" id="PS00478">
    <property type="entry name" value="LIM_DOMAIN_1"/>
    <property type="match status" value="2"/>
</dbReference>
<dbReference type="PROSITE" id="PS50023">
    <property type="entry name" value="LIM_DOMAIN_2"/>
    <property type="match status" value="2"/>
</dbReference>
<name>LHX1_MOUSE</name>
<protein>
    <recommendedName>
        <fullName>LIM/homeobox protein Lhx1</fullName>
        <shortName>LIM homeobox protein 1</shortName>
    </recommendedName>
    <alternativeName>
        <fullName>Homeobox protein Lim-1</fullName>
    </alternativeName>
</protein>
<gene>
    <name type="primary">Lhx1</name>
    <name type="synonym">Lim-1</name>
    <name type="synonym">Lim1</name>
</gene>
<feature type="chain" id="PRO_0000075771" description="LIM/homeobox protein Lhx1">
    <location>
        <begin position="1"/>
        <end position="406"/>
    </location>
</feature>
<feature type="domain" description="LIM zinc-binding 1" evidence="4">
    <location>
        <begin position="4"/>
        <end position="54"/>
    </location>
</feature>
<feature type="domain" description="LIM zinc-binding 2" evidence="4">
    <location>
        <begin position="63"/>
        <end position="117"/>
    </location>
</feature>
<feature type="DNA-binding region" description="Homeobox" evidence="3">
    <location>
        <begin position="180"/>
        <end position="239"/>
    </location>
</feature>
<feature type="region of interest" description="Disordered" evidence="5">
    <location>
        <begin position="128"/>
        <end position="189"/>
    </location>
</feature>
<feature type="region of interest" description="Disordered" evidence="5">
    <location>
        <begin position="294"/>
        <end position="372"/>
    </location>
</feature>
<feature type="compositionally biased region" description="Low complexity" evidence="5">
    <location>
        <begin position="137"/>
        <end position="148"/>
    </location>
</feature>
<feature type="compositionally biased region" description="Basic and acidic residues" evidence="5">
    <location>
        <begin position="151"/>
        <end position="167"/>
    </location>
</feature>
<feature type="compositionally biased region" description="Low complexity" evidence="5">
    <location>
        <begin position="315"/>
        <end position="327"/>
    </location>
</feature>
<feature type="compositionally biased region" description="Pro residues" evidence="5">
    <location>
        <begin position="352"/>
        <end position="362"/>
    </location>
</feature>
<feature type="modified residue" description="Phosphoserine" evidence="2">
    <location>
        <position position="162"/>
    </location>
</feature>
<feature type="mutagenesis site" description="Disrupts LDB1-binding; when associated with G-88." evidence="9">
    <original>C</original>
    <variation>G</variation>
    <location>
        <position position="28"/>
    </location>
</feature>
<feature type="mutagenesis site" description="Disrupts LDB1-binding; when associated with G-28." evidence="9">
    <original>C</original>
    <variation>G</variation>
    <location>
        <position position="88"/>
    </location>
</feature>
<feature type="sequence conflict" description="In Ref. 2." evidence="11" ref="2">
    <original>L</original>
    <variation>LARQVRPVL</variation>
    <location>
        <position position="12"/>
    </location>
</feature>
<feature type="sequence conflict" description="In Ref. 2; AAC60669." evidence="11" ref="2">
    <location>
        <begin position="24"/>
        <end position="31"/>
    </location>
</feature>
<feature type="sequence conflict" description="In Ref. 2; AAC60669." evidence="11" ref="2">
    <original>R</original>
    <variation>A</variation>
    <location>
        <position position="236"/>
    </location>
</feature>
<feature type="sequence conflict" description="In Ref. 2; AAC60669." evidence="11" ref="2">
    <original>H</original>
    <variation>HH</variation>
    <location>
        <position position="335"/>
    </location>
</feature>